<gene>
    <name evidence="2" type="primary">ddl</name>
    <name type="synonym">ddlB</name>
    <name type="ordered locus">NE0994</name>
</gene>
<sequence>MNTRDVGKVAVLLGGRSAEREISLRSGQAVLAALQRSRVNAHAFDPAGQPLENLLQQGFDRVFIALHGRYGEDGSVQGALELMELPYTGSGILASALAMDKWRTKMIWQAAGINTPDYVMLDASSRFRDVADRLGLPLIIKPAREGSTLGLNKVDNEQDFRSAYQAAAEYDSLVLAEQFIQGIELTAAILDDMPLPLVRIDVAEGLYDYQAKYFSESTRYTCPSGLSAALTTRIQEQALYAHRILGCTGWSRVDLILDENEQPFFLETNTSPGMTDHSLVPMAAKAAGISFDELVVQILELSCEH</sequence>
<accession>Q82VS0</accession>
<comment type="function">
    <text evidence="2">Cell wall formation.</text>
</comment>
<comment type="catalytic activity">
    <reaction evidence="2">
        <text>2 D-alanine + ATP = D-alanyl-D-alanine + ADP + phosphate + H(+)</text>
        <dbReference type="Rhea" id="RHEA:11224"/>
        <dbReference type="ChEBI" id="CHEBI:15378"/>
        <dbReference type="ChEBI" id="CHEBI:30616"/>
        <dbReference type="ChEBI" id="CHEBI:43474"/>
        <dbReference type="ChEBI" id="CHEBI:57416"/>
        <dbReference type="ChEBI" id="CHEBI:57822"/>
        <dbReference type="ChEBI" id="CHEBI:456216"/>
        <dbReference type="EC" id="6.3.2.4"/>
    </reaction>
</comment>
<comment type="cofactor">
    <cofactor evidence="1">
        <name>Mg(2+)</name>
        <dbReference type="ChEBI" id="CHEBI:18420"/>
    </cofactor>
    <cofactor evidence="1">
        <name>Mn(2+)</name>
        <dbReference type="ChEBI" id="CHEBI:29035"/>
    </cofactor>
    <text evidence="1">Binds 2 magnesium or manganese ions per subunit.</text>
</comment>
<comment type="pathway">
    <text evidence="2">Cell wall biogenesis; peptidoglycan biosynthesis.</text>
</comment>
<comment type="subcellular location">
    <subcellularLocation>
        <location evidence="2">Cytoplasm</location>
    </subcellularLocation>
</comment>
<comment type="similarity">
    <text evidence="2">Belongs to the D-alanine--D-alanine ligase family.</text>
</comment>
<dbReference type="EC" id="6.3.2.4" evidence="2"/>
<dbReference type="EMBL" id="AL954747">
    <property type="protein sequence ID" value="CAD84905.1"/>
    <property type="molecule type" value="Genomic_DNA"/>
</dbReference>
<dbReference type="RefSeq" id="WP_011111603.1">
    <property type="nucleotide sequence ID" value="NC_004757.1"/>
</dbReference>
<dbReference type="SMR" id="Q82VS0"/>
<dbReference type="STRING" id="228410.NE0994"/>
<dbReference type="GeneID" id="87104185"/>
<dbReference type="KEGG" id="neu:NE0994"/>
<dbReference type="eggNOG" id="COG1181">
    <property type="taxonomic scope" value="Bacteria"/>
</dbReference>
<dbReference type="HOGENOM" id="CLU_039268_1_2_4"/>
<dbReference type="OrthoDB" id="9813261at2"/>
<dbReference type="PhylomeDB" id="Q82VS0"/>
<dbReference type="UniPathway" id="UPA00219"/>
<dbReference type="Proteomes" id="UP000001416">
    <property type="component" value="Chromosome"/>
</dbReference>
<dbReference type="GO" id="GO:0005829">
    <property type="term" value="C:cytosol"/>
    <property type="evidence" value="ECO:0007669"/>
    <property type="project" value="TreeGrafter"/>
</dbReference>
<dbReference type="GO" id="GO:0005524">
    <property type="term" value="F:ATP binding"/>
    <property type="evidence" value="ECO:0007669"/>
    <property type="project" value="UniProtKB-KW"/>
</dbReference>
<dbReference type="GO" id="GO:0008716">
    <property type="term" value="F:D-alanine-D-alanine ligase activity"/>
    <property type="evidence" value="ECO:0007669"/>
    <property type="project" value="UniProtKB-UniRule"/>
</dbReference>
<dbReference type="GO" id="GO:0046872">
    <property type="term" value="F:metal ion binding"/>
    <property type="evidence" value="ECO:0007669"/>
    <property type="project" value="UniProtKB-KW"/>
</dbReference>
<dbReference type="GO" id="GO:0071555">
    <property type="term" value="P:cell wall organization"/>
    <property type="evidence" value="ECO:0007669"/>
    <property type="project" value="UniProtKB-KW"/>
</dbReference>
<dbReference type="GO" id="GO:0009252">
    <property type="term" value="P:peptidoglycan biosynthetic process"/>
    <property type="evidence" value="ECO:0007669"/>
    <property type="project" value="UniProtKB-UniRule"/>
</dbReference>
<dbReference type="GO" id="GO:0008360">
    <property type="term" value="P:regulation of cell shape"/>
    <property type="evidence" value="ECO:0007669"/>
    <property type="project" value="UniProtKB-KW"/>
</dbReference>
<dbReference type="FunFam" id="3.40.50.20:FF:000013">
    <property type="entry name" value="D-alanine--D-alanine ligase"/>
    <property type="match status" value="1"/>
</dbReference>
<dbReference type="Gene3D" id="3.40.50.20">
    <property type="match status" value="1"/>
</dbReference>
<dbReference type="Gene3D" id="3.30.1490.20">
    <property type="entry name" value="ATP-grasp fold, A domain"/>
    <property type="match status" value="1"/>
</dbReference>
<dbReference type="Gene3D" id="3.30.470.20">
    <property type="entry name" value="ATP-grasp fold, B domain"/>
    <property type="match status" value="1"/>
</dbReference>
<dbReference type="HAMAP" id="MF_00047">
    <property type="entry name" value="Dala_Dala_lig"/>
    <property type="match status" value="1"/>
</dbReference>
<dbReference type="InterPro" id="IPR011761">
    <property type="entry name" value="ATP-grasp"/>
</dbReference>
<dbReference type="InterPro" id="IPR013815">
    <property type="entry name" value="ATP_grasp_subdomain_1"/>
</dbReference>
<dbReference type="InterPro" id="IPR000291">
    <property type="entry name" value="D-Ala_lig_Van_CS"/>
</dbReference>
<dbReference type="InterPro" id="IPR005905">
    <property type="entry name" value="D_ala_D_ala"/>
</dbReference>
<dbReference type="InterPro" id="IPR011095">
    <property type="entry name" value="Dala_Dala_lig_C"/>
</dbReference>
<dbReference type="InterPro" id="IPR011127">
    <property type="entry name" value="Dala_Dala_lig_N"/>
</dbReference>
<dbReference type="InterPro" id="IPR016185">
    <property type="entry name" value="PreATP-grasp_dom_sf"/>
</dbReference>
<dbReference type="NCBIfam" id="TIGR01205">
    <property type="entry name" value="D_ala_D_alaTIGR"/>
    <property type="match status" value="1"/>
</dbReference>
<dbReference type="NCBIfam" id="NF002378">
    <property type="entry name" value="PRK01372.1"/>
    <property type="match status" value="1"/>
</dbReference>
<dbReference type="PANTHER" id="PTHR23132">
    <property type="entry name" value="D-ALANINE--D-ALANINE LIGASE"/>
    <property type="match status" value="1"/>
</dbReference>
<dbReference type="PANTHER" id="PTHR23132:SF23">
    <property type="entry name" value="D-ALANINE--D-ALANINE LIGASE B"/>
    <property type="match status" value="1"/>
</dbReference>
<dbReference type="Pfam" id="PF07478">
    <property type="entry name" value="Dala_Dala_lig_C"/>
    <property type="match status" value="1"/>
</dbReference>
<dbReference type="Pfam" id="PF01820">
    <property type="entry name" value="Dala_Dala_lig_N"/>
    <property type="match status" value="1"/>
</dbReference>
<dbReference type="PIRSF" id="PIRSF039102">
    <property type="entry name" value="Ddl/VanB"/>
    <property type="match status" value="1"/>
</dbReference>
<dbReference type="SUPFAM" id="SSF56059">
    <property type="entry name" value="Glutathione synthetase ATP-binding domain-like"/>
    <property type="match status" value="1"/>
</dbReference>
<dbReference type="SUPFAM" id="SSF52440">
    <property type="entry name" value="PreATP-grasp domain"/>
    <property type="match status" value="1"/>
</dbReference>
<dbReference type="PROSITE" id="PS50975">
    <property type="entry name" value="ATP_GRASP"/>
    <property type="match status" value="1"/>
</dbReference>
<dbReference type="PROSITE" id="PS00843">
    <property type="entry name" value="DALA_DALA_LIGASE_1"/>
    <property type="match status" value="1"/>
</dbReference>
<dbReference type="PROSITE" id="PS00844">
    <property type="entry name" value="DALA_DALA_LIGASE_2"/>
    <property type="match status" value="1"/>
</dbReference>
<protein>
    <recommendedName>
        <fullName evidence="2">D-alanine--D-alanine ligase</fullName>
        <ecNumber evidence="2">6.3.2.4</ecNumber>
    </recommendedName>
    <alternativeName>
        <fullName evidence="2">D-Ala-D-Ala ligase</fullName>
    </alternativeName>
    <alternativeName>
        <fullName evidence="2">D-alanylalanine synthetase</fullName>
    </alternativeName>
</protein>
<reference key="1">
    <citation type="journal article" date="2003" name="J. Bacteriol.">
        <title>Complete genome sequence of the ammonia-oxidizing bacterium and obligate chemolithoautotroph Nitrosomonas europaea.</title>
        <authorList>
            <person name="Chain P."/>
            <person name="Lamerdin J.E."/>
            <person name="Larimer F.W."/>
            <person name="Regala W."/>
            <person name="Lao V."/>
            <person name="Land M.L."/>
            <person name="Hauser L."/>
            <person name="Hooper A.B."/>
            <person name="Klotz M.G."/>
            <person name="Norton J."/>
            <person name="Sayavedra-Soto L.A."/>
            <person name="Arciero D.M."/>
            <person name="Hommes N.G."/>
            <person name="Whittaker M.M."/>
            <person name="Arp D.J."/>
        </authorList>
    </citation>
    <scope>NUCLEOTIDE SEQUENCE [LARGE SCALE GENOMIC DNA]</scope>
    <source>
        <strain>ATCC 19718 / CIP 103999 / KCTC 2705 / NBRC 14298</strain>
    </source>
</reference>
<proteinExistence type="inferred from homology"/>
<organism>
    <name type="scientific">Nitrosomonas europaea (strain ATCC 19718 / CIP 103999 / KCTC 2705 / NBRC 14298)</name>
    <dbReference type="NCBI Taxonomy" id="228410"/>
    <lineage>
        <taxon>Bacteria</taxon>
        <taxon>Pseudomonadati</taxon>
        <taxon>Pseudomonadota</taxon>
        <taxon>Betaproteobacteria</taxon>
        <taxon>Nitrosomonadales</taxon>
        <taxon>Nitrosomonadaceae</taxon>
        <taxon>Nitrosomonas</taxon>
    </lineage>
</organism>
<feature type="chain" id="PRO_0000177847" description="D-alanine--D-alanine ligase">
    <location>
        <begin position="1"/>
        <end position="305"/>
    </location>
</feature>
<feature type="domain" description="ATP-grasp" evidence="2">
    <location>
        <begin position="105"/>
        <end position="300"/>
    </location>
</feature>
<feature type="binding site" evidence="2">
    <location>
        <begin position="131"/>
        <end position="186"/>
    </location>
    <ligand>
        <name>ATP</name>
        <dbReference type="ChEBI" id="CHEBI:30616"/>
    </ligand>
</feature>
<feature type="binding site" evidence="2">
    <location>
        <position position="254"/>
    </location>
    <ligand>
        <name>Mg(2+)</name>
        <dbReference type="ChEBI" id="CHEBI:18420"/>
        <label>1</label>
    </ligand>
</feature>
<feature type="binding site" evidence="2">
    <location>
        <position position="267"/>
    </location>
    <ligand>
        <name>Mg(2+)</name>
        <dbReference type="ChEBI" id="CHEBI:18420"/>
        <label>1</label>
    </ligand>
</feature>
<feature type="binding site" evidence="2">
    <location>
        <position position="267"/>
    </location>
    <ligand>
        <name>Mg(2+)</name>
        <dbReference type="ChEBI" id="CHEBI:18420"/>
        <label>2</label>
    </ligand>
</feature>
<feature type="binding site" evidence="2">
    <location>
        <position position="269"/>
    </location>
    <ligand>
        <name>Mg(2+)</name>
        <dbReference type="ChEBI" id="CHEBI:18420"/>
        <label>2</label>
    </ligand>
</feature>
<evidence type="ECO:0000250" key="1"/>
<evidence type="ECO:0000255" key="2">
    <source>
        <dbReference type="HAMAP-Rule" id="MF_00047"/>
    </source>
</evidence>
<name>DDL_NITEU</name>
<keyword id="KW-0067">ATP-binding</keyword>
<keyword id="KW-0133">Cell shape</keyword>
<keyword id="KW-0961">Cell wall biogenesis/degradation</keyword>
<keyword id="KW-0963">Cytoplasm</keyword>
<keyword id="KW-0436">Ligase</keyword>
<keyword id="KW-0460">Magnesium</keyword>
<keyword id="KW-0464">Manganese</keyword>
<keyword id="KW-0479">Metal-binding</keyword>
<keyword id="KW-0547">Nucleotide-binding</keyword>
<keyword id="KW-0573">Peptidoglycan synthesis</keyword>
<keyword id="KW-1185">Reference proteome</keyword>